<protein>
    <recommendedName>
        <fullName>Uncharacterized protein RSN1</fullName>
    </recommendedName>
    <alternativeName>
        <fullName>Rescuer of SRO7 at high Nacl protein 1</fullName>
    </alternativeName>
</protein>
<evidence type="ECO:0000250" key="1"/>
<evidence type="ECO:0000255" key="2"/>
<evidence type="ECO:0000256" key="3">
    <source>
        <dbReference type="SAM" id="MobiDB-lite"/>
    </source>
</evidence>
<evidence type="ECO:0000305" key="4"/>
<evidence type="ECO:0007744" key="5">
    <source>
    </source>
</evidence>
<keyword id="KW-0106">Calcium</keyword>
<keyword id="KW-0407">Ion channel</keyword>
<keyword id="KW-0406">Ion transport</keyword>
<keyword id="KW-0472">Membrane</keyword>
<keyword id="KW-0597">Phosphoprotein</keyword>
<keyword id="KW-1185">Reference proteome</keyword>
<keyword id="KW-0812">Transmembrane</keyword>
<keyword id="KW-1133">Transmembrane helix</keyword>
<keyword id="KW-0813">Transport</keyword>
<comment type="function">
    <text evidence="1">Acts as an osmosensitive calcium-permeable cation channel.</text>
</comment>
<comment type="subcellular location">
    <subcellularLocation>
        <location evidence="4">Membrane</location>
        <topology evidence="4">Multi-pass membrane protein</topology>
    </subcellularLocation>
</comment>
<comment type="similarity">
    <text evidence="4">Belongs to the CSC1 (TC 1.A.17) family.</text>
</comment>
<dbReference type="EMBL" id="Z49260">
    <property type="protein sequence ID" value="CAA89249.1"/>
    <property type="molecule type" value="Genomic_DNA"/>
</dbReference>
<dbReference type="EMBL" id="BK006946">
    <property type="protein sequence ID" value="DAA10166.1"/>
    <property type="molecule type" value="Genomic_DNA"/>
</dbReference>
<dbReference type="PIR" id="S54478">
    <property type="entry name" value="S54478"/>
</dbReference>
<dbReference type="RefSeq" id="NP_013993.1">
    <property type="nucleotide sequence ID" value="NM_001182773.1"/>
</dbReference>
<dbReference type="SMR" id="Q03516"/>
<dbReference type="BioGRID" id="35444">
    <property type="interactions" value="61"/>
</dbReference>
<dbReference type="DIP" id="DIP-6549N"/>
<dbReference type="FunCoup" id="Q03516">
    <property type="interactions" value="251"/>
</dbReference>
<dbReference type="IntAct" id="Q03516">
    <property type="interactions" value="14"/>
</dbReference>
<dbReference type="MINT" id="Q03516"/>
<dbReference type="STRING" id="4932.YMR266W"/>
<dbReference type="iPTMnet" id="Q03516"/>
<dbReference type="PaxDb" id="4932-YMR266W"/>
<dbReference type="PeptideAtlas" id="Q03516"/>
<dbReference type="EnsemblFungi" id="YMR266W_mRNA">
    <property type="protein sequence ID" value="YMR266W"/>
    <property type="gene ID" value="YMR266W"/>
</dbReference>
<dbReference type="GeneID" id="855308"/>
<dbReference type="KEGG" id="sce:YMR266W"/>
<dbReference type="AGR" id="SGD:S000004879"/>
<dbReference type="SGD" id="S000004879">
    <property type="gene designation" value="RSN1"/>
</dbReference>
<dbReference type="VEuPathDB" id="FungiDB:YMR266W"/>
<dbReference type="eggNOG" id="KOG1134">
    <property type="taxonomic scope" value="Eukaryota"/>
</dbReference>
<dbReference type="HOGENOM" id="CLU_002458_2_1_1"/>
<dbReference type="InParanoid" id="Q03516"/>
<dbReference type="OMA" id="PKRYYAH"/>
<dbReference type="OrthoDB" id="1076608at2759"/>
<dbReference type="BioCyc" id="YEAST:G3O-32940-MONOMER"/>
<dbReference type="Reactome" id="R-SCE-6798695">
    <property type="pathway name" value="Neutrophil degranulation"/>
</dbReference>
<dbReference type="BioGRID-ORCS" id="855308">
    <property type="hits" value="3 hits in 10 CRISPR screens"/>
</dbReference>
<dbReference type="PRO" id="PR:Q03516"/>
<dbReference type="Proteomes" id="UP000002311">
    <property type="component" value="Chromosome XIII"/>
</dbReference>
<dbReference type="RNAct" id="Q03516">
    <property type="molecule type" value="protein"/>
</dbReference>
<dbReference type="GO" id="GO:0071944">
    <property type="term" value="C:cell periphery"/>
    <property type="evidence" value="ECO:0007005"/>
    <property type="project" value="SGD"/>
</dbReference>
<dbReference type="GO" id="GO:0005783">
    <property type="term" value="C:endoplasmic reticulum"/>
    <property type="evidence" value="ECO:0007005"/>
    <property type="project" value="SGD"/>
</dbReference>
<dbReference type="GO" id="GO:0000329">
    <property type="term" value="C:fungal-type vacuole membrane"/>
    <property type="evidence" value="ECO:0007005"/>
    <property type="project" value="SGD"/>
</dbReference>
<dbReference type="GO" id="GO:0016020">
    <property type="term" value="C:membrane"/>
    <property type="evidence" value="ECO:0000314"/>
    <property type="project" value="SGD"/>
</dbReference>
<dbReference type="GO" id="GO:0005886">
    <property type="term" value="C:plasma membrane"/>
    <property type="evidence" value="ECO:0000318"/>
    <property type="project" value="GO_Central"/>
</dbReference>
<dbReference type="GO" id="GO:0005227">
    <property type="term" value="F:calcium-activated cation channel activity"/>
    <property type="evidence" value="ECO:0000318"/>
    <property type="project" value="GO_Central"/>
</dbReference>
<dbReference type="InterPro" id="IPR045122">
    <property type="entry name" value="Csc1-like"/>
</dbReference>
<dbReference type="InterPro" id="IPR003864">
    <property type="entry name" value="CSC1/OSCA1-like_7TM"/>
</dbReference>
<dbReference type="InterPro" id="IPR027815">
    <property type="entry name" value="CSC1/OSCA1-like_cyt"/>
</dbReference>
<dbReference type="InterPro" id="IPR032880">
    <property type="entry name" value="Csc1/OSCA1-like_N"/>
</dbReference>
<dbReference type="InterPro" id="IPR022257">
    <property type="entry name" value="PHM7_ext"/>
</dbReference>
<dbReference type="PANTHER" id="PTHR13018:SF26">
    <property type="entry name" value="DOMAIN PROTEIN, PUTATIVE (AFU_ORTHOLOGUE AFUA_5G10920)-RELATED"/>
    <property type="match status" value="1"/>
</dbReference>
<dbReference type="PANTHER" id="PTHR13018">
    <property type="entry name" value="PROBABLE MEMBRANE PROTEIN DUF221-RELATED"/>
    <property type="match status" value="1"/>
</dbReference>
<dbReference type="Pfam" id="PF14703">
    <property type="entry name" value="PHM7_cyt"/>
    <property type="match status" value="1"/>
</dbReference>
<dbReference type="Pfam" id="PF12621">
    <property type="entry name" value="PHM7_ext"/>
    <property type="match status" value="1"/>
</dbReference>
<dbReference type="Pfam" id="PF02714">
    <property type="entry name" value="RSN1_7TM"/>
    <property type="match status" value="1"/>
</dbReference>
<dbReference type="Pfam" id="PF13967">
    <property type="entry name" value="RSN1_TM"/>
    <property type="match status" value="1"/>
</dbReference>
<feature type="chain" id="PRO_0000203348" description="Uncharacterized protein RSN1">
    <location>
        <begin position="1"/>
        <end position="953"/>
    </location>
</feature>
<feature type="transmembrane region" description="Helical" evidence="2">
    <location>
        <begin position="23"/>
        <end position="43"/>
    </location>
</feature>
<feature type="transmembrane region" description="Helical" evidence="2">
    <location>
        <begin position="103"/>
        <end position="123"/>
    </location>
</feature>
<feature type="transmembrane region" description="Helical" evidence="2">
    <location>
        <begin position="148"/>
        <end position="168"/>
    </location>
</feature>
<feature type="transmembrane region" description="Helical" evidence="2">
    <location>
        <begin position="392"/>
        <end position="412"/>
    </location>
</feature>
<feature type="transmembrane region" description="Helical" evidence="2">
    <location>
        <begin position="435"/>
        <end position="455"/>
    </location>
</feature>
<feature type="transmembrane region" description="Helical" evidence="2">
    <location>
        <begin position="481"/>
        <end position="501"/>
    </location>
</feature>
<feature type="transmembrane region" description="Helical" evidence="2">
    <location>
        <begin position="540"/>
        <end position="560"/>
    </location>
</feature>
<feature type="transmembrane region" description="Helical" evidence="2">
    <location>
        <begin position="575"/>
        <end position="595"/>
    </location>
</feature>
<feature type="transmembrane region" description="Helical" evidence="2">
    <location>
        <begin position="599"/>
        <end position="619"/>
    </location>
</feature>
<feature type="transmembrane region" description="Helical" evidence="2">
    <location>
        <begin position="642"/>
        <end position="662"/>
    </location>
</feature>
<feature type="transmembrane region" description="Helical" evidence="2">
    <location>
        <begin position="666"/>
        <end position="686"/>
    </location>
</feature>
<feature type="region of interest" description="Disordered" evidence="3">
    <location>
        <begin position="910"/>
        <end position="953"/>
    </location>
</feature>
<feature type="compositionally biased region" description="Basic and acidic residues" evidence="3">
    <location>
        <begin position="942"/>
        <end position="953"/>
    </location>
</feature>
<feature type="modified residue" description="Phosphoserine" evidence="5">
    <location>
        <position position="949"/>
    </location>
</feature>
<reference key="1">
    <citation type="journal article" date="1997" name="Nature">
        <title>The nucleotide sequence of Saccharomyces cerevisiae chromosome XIII.</title>
        <authorList>
            <person name="Bowman S."/>
            <person name="Churcher C.M."/>
            <person name="Badcock K."/>
            <person name="Brown D."/>
            <person name="Chillingworth T."/>
            <person name="Connor R."/>
            <person name="Dedman K."/>
            <person name="Devlin K."/>
            <person name="Gentles S."/>
            <person name="Hamlin N."/>
            <person name="Hunt S."/>
            <person name="Jagels K."/>
            <person name="Lye G."/>
            <person name="Moule S."/>
            <person name="Odell C."/>
            <person name="Pearson D."/>
            <person name="Rajandream M.A."/>
            <person name="Rice P."/>
            <person name="Skelton J."/>
            <person name="Walsh S.V."/>
            <person name="Whitehead S."/>
            <person name="Barrell B.G."/>
        </authorList>
    </citation>
    <scope>NUCLEOTIDE SEQUENCE [LARGE SCALE GENOMIC DNA]</scope>
    <source>
        <strain>ATCC 204508 / S288c</strain>
    </source>
</reference>
<reference key="2">
    <citation type="journal article" date="2014" name="G3 (Bethesda)">
        <title>The reference genome sequence of Saccharomyces cerevisiae: Then and now.</title>
        <authorList>
            <person name="Engel S.R."/>
            <person name="Dietrich F.S."/>
            <person name="Fisk D.G."/>
            <person name="Binkley G."/>
            <person name="Balakrishnan R."/>
            <person name="Costanzo M.C."/>
            <person name="Dwight S.S."/>
            <person name="Hitz B.C."/>
            <person name="Karra K."/>
            <person name="Nash R.S."/>
            <person name="Weng S."/>
            <person name="Wong E.D."/>
            <person name="Lloyd P."/>
            <person name="Skrzypek M.S."/>
            <person name="Miyasato S.R."/>
            <person name="Simison M."/>
            <person name="Cherry J.M."/>
        </authorList>
    </citation>
    <scope>GENOME REANNOTATION</scope>
    <source>
        <strain>ATCC 204508 / S288c</strain>
    </source>
</reference>
<reference key="3">
    <citation type="journal article" date="2006" name="Mol. Biol. Cell">
        <title>The yeast tumor suppressor homologue Sro7p is required for targeting of the sodium pumping ATPase to the cell surface.</title>
        <authorList>
            <person name="Wadskog I."/>
            <person name="Forsmark A."/>
            <person name="Rossi G."/>
            <person name="Konopka C."/>
            <person name="Oyen M."/>
            <person name="Goksor M."/>
            <person name="Ronne H."/>
            <person name="Brennwald P."/>
            <person name="Adler L."/>
        </authorList>
    </citation>
    <scope>GENE NAME</scope>
</reference>
<reference key="4">
    <citation type="journal article" date="2007" name="Proc. Natl. Acad. Sci. U.S.A.">
        <title>Analysis of phosphorylation sites on proteins from Saccharomyces cerevisiae by electron transfer dissociation (ETD) mass spectrometry.</title>
        <authorList>
            <person name="Chi A."/>
            <person name="Huttenhower C."/>
            <person name="Geer L.Y."/>
            <person name="Coon J.J."/>
            <person name="Syka J.E.P."/>
            <person name="Bai D.L."/>
            <person name="Shabanowitz J."/>
            <person name="Burke D.J."/>
            <person name="Troyanskaya O.G."/>
            <person name="Hunt D.F."/>
        </authorList>
    </citation>
    <scope>PHOSPHORYLATION [LARGE SCALE ANALYSIS] AT SER-949</scope>
    <scope>IDENTIFICATION BY MASS SPECTROMETRY [LARGE SCALE ANALYSIS]</scope>
</reference>
<reference key="5">
    <citation type="journal article" date="2009" name="Science">
        <title>Global analysis of Cdk1 substrate phosphorylation sites provides insights into evolution.</title>
        <authorList>
            <person name="Holt L.J."/>
            <person name="Tuch B.B."/>
            <person name="Villen J."/>
            <person name="Johnson A.D."/>
            <person name="Gygi S.P."/>
            <person name="Morgan D.O."/>
        </authorList>
    </citation>
    <scope>IDENTIFICATION BY MASS SPECTROMETRY [LARGE SCALE ANALYSIS]</scope>
</reference>
<organism>
    <name type="scientific">Saccharomyces cerevisiae (strain ATCC 204508 / S288c)</name>
    <name type="common">Baker's yeast</name>
    <dbReference type="NCBI Taxonomy" id="559292"/>
    <lineage>
        <taxon>Eukaryota</taxon>
        <taxon>Fungi</taxon>
        <taxon>Dikarya</taxon>
        <taxon>Ascomycota</taxon>
        <taxon>Saccharomycotina</taxon>
        <taxon>Saccharomycetes</taxon>
        <taxon>Saccharomycetales</taxon>
        <taxon>Saccharomycetaceae</taxon>
        <taxon>Saccharomyces</taxon>
    </lineage>
</organism>
<gene>
    <name type="primary">RSN1</name>
    <name type="ordered locus">YMR266W</name>
    <name type="ORF">YM8156.08</name>
</gene>
<proteinExistence type="evidence at protein level"/>
<name>RSN1_YEAST</name>
<sequence length="953" mass="107673">MNSTNSTNSTTTATSTNTSTQQVVTSLVSNGTIFGVFVIAFLILRIKLKRIYEPKSSFNLINEEKKPEPLPQGVWQWLKPLLKKSDNFVIQQAGLDGYFFLRYLFIIAIYCAVSMSYIFPILLSINASNGNHESGLNQLAYQNVKHRGRYFAHVFCGWIFFWGFLYIIYRELYFYTSMKQAVLASPRYAKKLSSRTVLFQTVPKQYLSEEEFSKLFDGVKRVWIARGSGSIEAMVKARDNMAIQLEGAETKYLKAALKKIKKLNKKSPQLSVSDNIAEYVPDKKRPHHKINKVAKFFFGKKVDTISYIKEELPKLNQKVKALQEDHENSSPFNSVFVEFESQYQAQVAAQITTYHAPLFMTPVYIGIEPSDVVWFNLRMFWWERLGREVSAVSAIVALVILWAFPVAFVGMISNITSLTNEVKWLKFIYKLPKQLLGLLTSLAPTVALAVLMSFLPKFIRGMAITQGAPSKQNVEYFTQQAYFAFQVIQVFLVTTLSSAATSTVTEIVKEPTKAMDLLASNLPKASNFFMSYVILQGLSISSGALLQIVPLILFYVLGAFLDGTVRKKWNRFCGLSSMQWGTAFPVYTNLAVITFSYSIISPLILLFAAVAFFLLYIAYLYNLTYVYQESPDARGIYYPRALFQTIVGIYIGQICLLGLFAVGKGWGPIVLQVIGICVTVLIHLHLSAAFDHLSKVIPVDTMKPLDGVSDTPSFKNIYKGIESTKVKKNTFGANIDMDGIKELPEFPIKKYHKRSESVTEQQVENSIFSENTFEYQFNPANEANADGHAINAENLIEDVPLLADGDTMKIPPAPWWKRFLKPHIYYSYKAVKSRLPEIYGLVDPDERVNDFDISHAYDYPAVSAQCPELWIPRDPFGFSKLLISDVSGVVEMNDENATIDENLKFTLRDVPPPYNDVKDEANGEANGEFDTASKENNPFADPKYKEEESRSAV</sequence>
<accession>Q03516</accession>
<accession>D6W092</accession>